<name>MEP1_PODAN</name>
<evidence type="ECO:0000250" key="1"/>
<evidence type="ECO:0000255" key="2"/>
<evidence type="ECO:0000255" key="3">
    <source>
        <dbReference type="PROSITE-ProRule" id="PRU10095"/>
    </source>
</evidence>
<evidence type="ECO:0000305" key="4"/>
<keyword id="KW-1015">Disulfide bond</keyword>
<keyword id="KW-0325">Glycoprotein</keyword>
<keyword id="KW-0378">Hydrolase</keyword>
<keyword id="KW-0479">Metal-binding</keyword>
<keyword id="KW-0482">Metalloprotease</keyword>
<keyword id="KW-0645">Protease</keyword>
<keyword id="KW-1185">Reference proteome</keyword>
<keyword id="KW-0964">Secreted</keyword>
<keyword id="KW-0732">Signal</keyword>
<keyword id="KW-0862">Zinc</keyword>
<reference key="1">
    <citation type="journal article" date="2008" name="Genome Biol.">
        <title>The genome sequence of the model ascomycete fungus Podospora anserina.</title>
        <authorList>
            <person name="Espagne E."/>
            <person name="Lespinet O."/>
            <person name="Malagnac F."/>
            <person name="Da Silva C."/>
            <person name="Jaillon O."/>
            <person name="Porcel B.M."/>
            <person name="Couloux A."/>
            <person name="Aury J.-M."/>
            <person name="Segurens B."/>
            <person name="Poulain J."/>
            <person name="Anthouard V."/>
            <person name="Grossetete S."/>
            <person name="Khalili H."/>
            <person name="Coppin E."/>
            <person name="Dequard-Chablat M."/>
            <person name="Picard M."/>
            <person name="Contamine V."/>
            <person name="Arnaise S."/>
            <person name="Bourdais A."/>
            <person name="Berteaux-Lecellier V."/>
            <person name="Gautheret D."/>
            <person name="de Vries R.P."/>
            <person name="Battaglia E."/>
            <person name="Coutinho P.M."/>
            <person name="Danchin E.G.J."/>
            <person name="Henrissat B."/>
            <person name="El Khoury R."/>
            <person name="Sainsard-Chanet A."/>
            <person name="Boivin A."/>
            <person name="Pinan-Lucarre B."/>
            <person name="Sellem C.H."/>
            <person name="Debuchy R."/>
            <person name="Wincker P."/>
            <person name="Weissenbach J."/>
            <person name="Silar P."/>
        </authorList>
    </citation>
    <scope>NUCLEOTIDE SEQUENCE [LARGE SCALE GENOMIC DNA]</scope>
    <source>
        <strain>S / ATCC MYA-4624 / DSM 980 / FGSC 10383</strain>
    </source>
</reference>
<reference key="2">
    <citation type="journal article" date="2014" name="Genetics">
        <title>Maintaining two mating types: Structure of the mating type locus and its role in heterokaryosis in Podospora anserina.</title>
        <authorList>
            <person name="Grognet P."/>
            <person name="Bidard F."/>
            <person name="Kuchly C."/>
            <person name="Tong L.C.H."/>
            <person name="Coppin E."/>
            <person name="Benkhali J.A."/>
            <person name="Couloux A."/>
            <person name="Wincker P."/>
            <person name="Debuchy R."/>
            <person name="Silar P."/>
        </authorList>
    </citation>
    <scope>GENOME REANNOTATION</scope>
    <source>
        <strain>S / ATCC MYA-4624 / DSM 980 / FGSC 10383</strain>
    </source>
</reference>
<sequence length="293" mass="31294">MRFSLALAAAGLAQTAFAAPQPSRGFGCGAPEPSEELLQVSQQFAVEEAQALAESYRSGNLTARDVTAQAISVKVYIHVVAASTALSGGYLTDTMINNQFSVLQSAFAPYGISFTLAGTDKTVNANWADDSKGYEMTMKRALRKGTYKDLNLYFLQKMGGNLGYCYFPTTASPGSTAYIRDGCTILYSTTPGGSSTNYNLGHTATHEVGHWFGLYHTFQGGCTGAGDSVSDTPAQASASSGCPVGRDSCPSQAGVDPIHNYMDYSIDSCYEEFTPGQQTRINSFWTSYRQNAS</sequence>
<dbReference type="EC" id="3.4.24.-"/>
<dbReference type="EMBL" id="CU633447">
    <property type="protein sequence ID" value="CAP61020.1"/>
    <property type="molecule type" value="Genomic_DNA"/>
</dbReference>
<dbReference type="EMBL" id="FO904937">
    <property type="protein sequence ID" value="CDP26407.1"/>
    <property type="molecule type" value="Genomic_DNA"/>
</dbReference>
<dbReference type="RefSeq" id="XP_001903248.1">
    <property type="nucleotide sequence ID" value="XM_001903213.1"/>
</dbReference>
<dbReference type="SMR" id="B2AC45"/>
<dbReference type="MEROPS" id="M43.002"/>
<dbReference type="GeneID" id="6187257"/>
<dbReference type="KEGG" id="pan:PODANSg260"/>
<dbReference type="VEuPathDB" id="FungiDB:PODANS_2_14170"/>
<dbReference type="eggNOG" id="ENOG502S6EM">
    <property type="taxonomic scope" value="Eukaryota"/>
</dbReference>
<dbReference type="HOGENOM" id="CLU_048726_0_0_1"/>
<dbReference type="InParanoid" id="B2AC45"/>
<dbReference type="OrthoDB" id="536211at2759"/>
<dbReference type="Proteomes" id="UP000001197">
    <property type="component" value="Chromosome 2"/>
</dbReference>
<dbReference type="GO" id="GO:0005576">
    <property type="term" value="C:extracellular region"/>
    <property type="evidence" value="ECO:0007669"/>
    <property type="project" value="UniProtKB-SubCell"/>
</dbReference>
<dbReference type="GO" id="GO:0046872">
    <property type="term" value="F:metal ion binding"/>
    <property type="evidence" value="ECO:0007669"/>
    <property type="project" value="UniProtKB-KW"/>
</dbReference>
<dbReference type="GO" id="GO:0008237">
    <property type="term" value="F:metallopeptidase activity"/>
    <property type="evidence" value="ECO:0007669"/>
    <property type="project" value="UniProtKB-KW"/>
</dbReference>
<dbReference type="GO" id="GO:0006508">
    <property type="term" value="P:proteolysis"/>
    <property type="evidence" value="ECO:0007669"/>
    <property type="project" value="UniProtKB-KW"/>
</dbReference>
<dbReference type="CDD" id="cd04275">
    <property type="entry name" value="ZnMc_pappalysin_like"/>
    <property type="match status" value="1"/>
</dbReference>
<dbReference type="Gene3D" id="3.40.390.10">
    <property type="entry name" value="Collagenase (Catalytic Domain)"/>
    <property type="match status" value="1"/>
</dbReference>
<dbReference type="InterPro" id="IPR024079">
    <property type="entry name" value="MetalloPept_cat_dom_sf"/>
</dbReference>
<dbReference type="InterPro" id="IPR008754">
    <property type="entry name" value="Peptidase_M43"/>
</dbReference>
<dbReference type="PANTHER" id="PTHR47466">
    <property type="match status" value="1"/>
</dbReference>
<dbReference type="PANTHER" id="PTHR47466:SF1">
    <property type="entry name" value="METALLOPROTEASE MEP1 (AFU_ORTHOLOGUE AFUA_1G07730)-RELATED"/>
    <property type="match status" value="1"/>
</dbReference>
<dbReference type="Pfam" id="PF05572">
    <property type="entry name" value="Peptidase_M43"/>
    <property type="match status" value="1"/>
</dbReference>
<dbReference type="SUPFAM" id="SSF55486">
    <property type="entry name" value="Metalloproteases ('zincins'), catalytic domain"/>
    <property type="match status" value="1"/>
</dbReference>
<dbReference type="PROSITE" id="PS00142">
    <property type="entry name" value="ZINC_PROTEASE"/>
    <property type="match status" value="1"/>
</dbReference>
<organism>
    <name type="scientific">Podospora anserina (strain S / ATCC MYA-4624 / DSM 980 / FGSC 10383)</name>
    <name type="common">Pleurage anserina</name>
    <dbReference type="NCBI Taxonomy" id="515849"/>
    <lineage>
        <taxon>Eukaryota</taxon>
        <taxon>Fungi</taxon>
        <taxon>Dikarya</taxon>
        <taxon>Ascomycota</taxon>
        <taxon>Pezizomycotina</taxon>
        <taxon>Sordariomycetes</taxon>
        <taxon>Sordariomycetidae</taxon>
        <taxon>Sordariales</taxon>
        <taxon>Podosporaceae</taxon>
        <taxon>Podospora</taxon>
        <taxon>Podospora anserina</taxon>
    </lineage>
</organism>
<comment type="function">
    <text evidence="1">Secreted metalloproteinase that allows assimilation of proteinaceous substrates.</text>
</comment>
<comment type="subcellular location">
    <subcellularLocation>
        <location evidence="1">Secreted</location>
    </subcellularLocation>
</comment>
<comment type="similarity">
    <text evidence="4">Belongs to the peptidase M43B family.</text>
</comment>
<accession>B2AC45</accession>
<accession>A0A090CKY3</accession>
<gene>
    <name type="ordered locus">Pa_2_14170</name>
    <name type="ORF">PODANS_2_14170</name>
</gene>
<proteinExistence type="inferred from homology"/>
<protein>
    <recommendedName>
        <fullName>Extracellular metalloprotease PODANS_2_14170</fullName>
        <ecNumber>3.4.24.-</ecNumber>
    </recommendedName>
</protein>
<feature type="signal peptide" evidence="2">
    <location>
        <begin position="1"/>
        <end position="18"/>
    </location>
</feature>
<feature type="chain" id="PRO_0000407204" description="Extracellular metalloprotease PODANS_2_14170">
    <location>
        <begin position="19"/>
        <end position="293"/>
    </location>
</feature>
<feature type="active site" evidence="3">
    <location>
        <position position="207"/>
    </location>
</feature>
<feature type="binding site" evidence="3">
    <location>
        <position position="206"/>
    </location>
    <ligand>
        <name>Zn(2+)</name>
        <dbReference type="ChEBI" id="CHEBI:29105"/>
        <note>catalytic</note>
    </ligand>
</feature>
<feature type="binding site" evidence="3">
    <location>
        <position position="210"/>
    </location>
    <ligand>
        <name>Zn(2+)</name>
        <dbReference type="ChEBI" id="CHEBI:29105"/>
        <note>catalytic</note>
    </ligand>
</feature>
<feature type="glycosylation site" description="N-linked (GlcNAc...) asparagine" evidence="2">
    <location>
        <position position="60"/>
    </location>
</feature>
<feature type="disulfide bond" evidence="1">
    <location>
        <begin position="242"/>
        <end position="269"/>
    </location>
</feature>